<comment type="function">
    <text evidence="1">Catalyzes the transfer of the phosphoribosyl group of 5-phosphorylribose-1-pyrophosphate (PRPP) to anthranilate to yield N-(5'-phosphoribosyl)-anthranilate (PRA).</text>
</comment>
<comment type="catalytic activity">
    <reaction evidence="1">
        <text>N-(5-phospho-beta-D-ribosyl)anthranilate + diphosphate = 5-phospho-alpha-D-ribose 1-diphosphate + anthranilate</text>
        <dbReference type="Rhea" id="RHEA:11768"/>
        <dbReference type="ChEBI" id="CHEBI:16567"/>
        <dbReference type="ChEBI" id="CHEBI:18277"/>
        <dbReference type="ChEBI" id="CHEBI:33019"/>
        <dbReference type="ChEBI" id="CHEBI:58017"/>
        <dbReference type="EC" id="2.4.2.18"/>
    </reaction>
</comment>
<comment type="cofactor">
    <cofactor evidence="1">
        <name>Mg(2+)</name>
        <dbReference type="ChEBI" id="CHEBI:18420"/>
    </cofactor>
    <text evidence="1">Binds 2 magnesium ions per monomer.</text>
</comment>
<comment type="pathway">
    <text evidence="1">Amino-acid biosynthesis; L-tryptophan biosynthesis; L-tryptophan from chorismate: step 2/5.</text>
</comment>
<comment type="subunit">
    <text evidence="1">Homodimer.</text>
</comment>
<comment type="similarity">
    <text evidence="1">Belongs to the anthranilate phosphoribosyltransferase family.</text>
</comment>
<reference key="1">
    <citation type="submission" date="2007-06" db="EMBL/GenBank/DDBJ databases">
        <title>Complete sequence of Sinorhizobium medicae WSM419 chromosome.</title>
        <authorList>
            <consortium name="US DOE Joint Genome Institute"/>
            <person name="Copeland A."/>
            <person name="Lucas S."/>
            <person name="Lapidus A."/>
            <person name="Barry K."/>
            <person name="Glavina del Rio T."/>
            <person name="Dalin E."/>
            <person name="Tice H."/>
            <person name="Pitluck S."/>
            <person name="Chain P."/>
            <person name="Malfatti S."/>
            <person name="Shin M."/>
            <person name="Vergez L."/>
            <person name="Schmutz J."/>
            <person name="Larimer F."/>
            <person name="Land M."/>
            <person name="Hauser L."/>
            <person name="Kyrpides N."/>
            <person name="Mikhailova N."/>
            <person name="Reeve W.G."/>
            <person name="Richardson P."/>
        </authorList>
    </citation>
    <scope>NUCLEOTIDE SEQUENCE [LARGE SCALE GENOMIC DNA]</scope>
    <source>
        <strain>WSM419</strain>
    </source>
</reference>
<keyword id="KW-0028">Amino-acid biosynthesis</keyword>
<keyword id="KW-0057">Aromatic amino acid biosynthesis</keyword>
<keyword id="KW-0328">Glycosyltransferase</keyword>
<keyword id="KW-0460">Magnesium</keyword>
<keyword id="KW-0479">Metal-binding</keyword>
<keyword id="KW-0808">Transferase</keyword>
<keyword id="KW-0822">Tryptophan biosynthesis</keyword>
<feature type="chain" id="PRO_1000043071" description="Anthranilate phosphoribosyltransferase">
    <location>
        <begin position="1"/>
        <end position="337"/>
    </location>
</feature>
<feature type="binding site" evidence="1">
    <location>
        <position position="81"/>
    </location>
    <ligand>
        <name>5-phospho-alpha-D-ribose 1-diphosphate</name>
        <dbReference type="ChEBI" id="CHEBI:58017"/>
    </ligand>
</feature>
<feature type="binding site" evidence="1">
    <location>
        <position position="81"/>
    </location>
    <ligand>
        <name>anthranilate</name>
        <dbReference type="ChEBI" id="CHEBI:16567"/>
        <label>1</label>
    </ligand>
</feature>
<feature type="binding site" evidence="1">
    <location>
        <begin position="84"/>
        <end position="85"/>
    </location>
    <ligand>
        <name>5-phospho-alpha-D-ribose 1-diphosphate</name>
        <dbReference type="ChEBI" id="CHEBI:58017"/>
    </ligand>
</feature>
<feature type="binding site" evidence="1">
    <location>
        <position position="89"/>
    </location>
    <ligand>
        <name>5-phospho-alpha-D-ribose 1-diphosphate</name>
        <dbReference type="ChEBI" id="CHEBI:58017"/>
    </ligand>
</feature>
<feature type="binding site" evidence="1">
    <location>
        <begin position="91"/>
        <end position="94"/>
    </location>
    <ligand>
        <name>5-phospho-alpha-D-ribose 1-diphosphate</name>
        <dbReference type="ChEBI" id="CHEBI:58017"/>
    </ligand>
</feature>
<feature type="binding site" evidence="1">
    <location>
        <position position="93"/>
    </location>
    <ligand>
        <name>Mg(2+)</name>
        <dbReference type="ChEBI" id="CHEBI:18420"/>
        <label>1</label>
    </ligand>
</feature>
<feature type="binding site" evidence="1">
    <location>
        <begin position="109"/>
        <end position="117"/>
    </location>
    <ligand>
        <name>5-phospho-alpha-D-ribose 1-diphosphate</name>
        <dbReference type="ChEBI" id="CHEBI:58017"/>
    </ligand>
</feature>
<feature type="binding site" evidence="1">
    <location>
        <position position="112"/>
    </location>
    <ligand>
        <name>anthranilate</name>
        <dbReference type="ChEBI" id="CHEBI:16567"/>
        <label>1</label>
    </ligand>
</feature>
<feature type="binding site" evidence="1">
    <location>
        <position position="121"/>
    </location>
    <ligand>
        <name>5-phospho-alpha-D-ribose 1-diphosphate</name>
        <dbReference type="ChEBI" id="CHEBI:58017"/>
    </ligand>
</feature>
<feature type="binding site" evidence="1">
    <location>
        <position position="167"/>
    </location>
    <ligand>
        <name>anthranilate</name>
        <dbReference type="ChEBI" id="CHEBI:16567"/>
        <label>2</label>
    </ligand>
</feature>
<feature type="binding site" evidence="1">
    <location>
        <position position="225"/>
    </location>
    <ligand>
        <name>Mg(2+)</name>
        <dbReference type="ChEBI" id="CHEBI:18420"/>
        <label>2</label>
    </ligand>
</feature>
<feature type="binding site" evidence="1">
    <location>
        <position position="226"/>
    </location>
    <ligand>
        <name>Mg(2+)</name>
        <dbReference type="ChEBI" id="CHEBI:18420"/>
        <label>1</label>
    </ligand>
</feature>
<feature type="binding site" evidence="1">
    <location>
        <position position="226"/>
    </location>
    <ligand>
        <name>Mg(2+)</name>
        <dbReference type="ChEBI" id="CHEBI:18420"/>
        <label>2</label>
    </ligand>
</feature>
<dbReference type="EC" id="2.4.2.18" evidence="1"/>
<dbReference type="EMBL" id="CP000738">
    <property type="protein sequence ID" value="ABR60254.1"/>
    <property type="molecule type" value="Genomic_DNA"/>
</dbReference>
<dbReference type="RefSeq" id="WP_011975564.1">
    <property type="nucleotide sequence ID" value="NC_009636.1"/>
</dbReference>
<dbReference type="RefSeq" id="YP_001327089.1">
    <property type="nucleotide sequence ID" value="NC_009636.1"/>
</dbReference>
<dbReference type="SMR" id="A6U9C4"/>
<dbReference type="STRING" id="366394.Smed_1408"/>
<dbReference type="GeneID" id="61612636"/>
<dbReference type="KEGG" id="smd:Smed_1408"/>
<dbReference type="PATRIC" id="fig|366394.8.peg.4537"/>
<dbReference type="eggNOG" id="COG0547">
    <property type="taxonomic scope" value="Bacteria"/>
</dbReference>
<dbReference type="HOGENOM" id="CLU_034315_2_1_5"/>
<dbReference type="OrthoDB" id="9806430at2"/>
<dbReference type="UniPathway" id="UPA00035">
    <property type="reaction ID" value="UER00041"/>
</dbReference>
<dbReference type="Proteomes" id="UP000001108">
    <property type="component" value="Chromosome"/>
</dbReference>
<dbReference type="GO" id="GO:0005829">
    <property type="term" value="C:cytosol"/>
    <property type="evidence" value="ECO:0007669"/>
    <property type="project" value="TreeGrafter"/>
</dbReference>
<dbReference type="GO" id="GO:0004048">
    <property type="term" value="F:anthranilate phosphoribosyltransferase activity"/>
    <property type="evidence" value="ECO:0007669"/>
    <property type="project" value="UniProtKB-UniRule"/>
</dbReference>
<dbReference type="GO" id="GO:0000287">
    <property type="term" value="F:magnesium ion binding"/>
    <property type="evidence" value="ECO:0007669"/>
    <property type="project" value="UniProtKB-UniRule"/>
</dbReference>
<dbReference type="GO" id="GO:0000162">
    <property type="term" value="P:L-tryptophan biosynthetic process"/>
    <property type="evidence" value="ECO:0007669"/>
    <property type="project" value="UniProtKB-UniRule"/>
</dbReference>
<dbReference type="FunFam" id="3.40.1030.10:FF:000002">
    <property type="entry name" value="Anthranilate phosphoribosyltransferase"/>
    <property type="match status" value="1"/>
</dbReference>
<dbReference type="Gene3D" id="3.40.1030.10">
    <property type="entry name" value="Nucleoside phosphorylase/phosphoribosyltransferase catalytic domain"/>
    <property type="match status" value="1"/>
</dbReference>
<dbReference type="Gene3D" id="1.20.970.10">
    <property type="entry name" value="Transferase, Pyrimidine Nucleoside Phosphorylase, Chain C"/>
    <property type="match status" value="1"/>
</dbReference>
<dbReference type="HAMAP" id="MF_00211">
    <property type="entry name" value="TrpD"/>
    <property type="match status" value="1"/>
</dbReference>
<dbReference type="InterPro" id="IPR005940">
    <property type="entry name" value="Anthranilate_Pribosyl_Tfrase"/>
</dbReference>
<dbReference type="InterPro" id="IPR000312">
    <property type="entry name" value="Glycosyl_Trfase_fam3"/>
</dbReference>
<dbReference type="InterPro" id="IPR017459">
    <property type="entry name" value="Glycosyl_Trfase_fam3_N_dom"/>
</dbReference>
<dbReference type="InterPro" id="IPR036320">
    <property type="entry name" value="Glycosyl_Trfase_fam3_N_dom_sf"/>
</dbReference>
<dbReference type="InterPro" id="IPR035902">
    <property type="entry name" value="Nuc_phospho_transferase"/>
</dbReference>
<dbReference type="NCBIfam" id="TIGR01245">
    <property type="entry name" value="trpD"/>
    <property type="match status" value="1"/>
</dbReference>
<dbReference type="PANTHER" id="PTHR43285">
    <property type="entry name" value="ANTHRANILATE PHOSPHORIBOSYLTRANSFERASE"/>
    <property type="match status" value="1"/>
</dbReference>
<dbReference type="PANTHER" id="PTHR43285:SF2">
    <property type="entry name" value="ANTHRANILATE PHOSPHORIBOSYLTRANSFERASE"/>
    <property type="match status" value="1"/>
</dbReference>
<dbReference type="Pfam" id="PF02885">
    <property type="entry name" value="Glycos_trans_3N"/>
    <property type="match status" value="1"/>
</dbReference>
<dbReference type="Pfam" id="PF00591">
    <property type="entry name" value="Glycos_transf_3"/>
    <property type="match status" value="1"/>
</dbReference>
<dbReference type="SUPFAM" id="SSF52418">
    <property type="entry name" value="Nucleoside phosphorylase/phosphoribosyltransferase catalytic domain"/>
    <property type="match status" value="1"/>
</dbReference>
<dbReference type="SUPFAM" id="SSF47648">
    <property type="entry name" value="Nucleoside phosphorylase/phosphoribosyltransferase N-terminal domain"/>
    <property type="match status" value="1"/>
</dbReference>
<protein>
    <recommendedName>
        <fullName evidence="1">Anthranilate phosphoribosyltransferase</fullName>
        <ecNumber evidence="1">2.4.2.18</ecNumber>
    </recommendedName>
</protein>
<proteinExistence type="inferred from homology"/>
<accession>A6U9C4</accession>
<name>TRPD_SINMW</name>
<gene>
    <name evidence="1" type="primary">trpD</name>
    <name type="ordered locus">Smed_1408</name>
</gene>
<sequence length="337" mass="34685">MSDLKPFVAKVAAREALSRDDARAAFEIIMSGAATPSQIGGFLMALRVRGETVDEIVGAVGAMRARMLHVKAPDGSIDIVGTGGDGAGTYNISTLAALIVAGAGVPVAKHGNRALSSKSGTADALSCLGVNLEIGPEAISRCIGEAGLGFMFAQQHHSAMRHVGPTRVELGTRTIFNLLGPLANPAGVRQQLVGVYAPQWVDPLAEVLRDLGSESVWVVHGEGLDEITTTGVTKVAALKDGTITNFELTPADFGLERVTLDALKGGDGAHNAAALQAVLDGAENAYRDISLANAAASLMIAGRAKDLMEGMDLARKSLSSGAAKVALQRLITVSNAA</sequence>
<evidence type="ECO:0000255" key="1">
    <source>
        <dbReference type="HAMAP-Rule" id="MF_00211"/>
    </source>
</evidence>
<organism>
    <name type="scientific">Sinorhizobium medicae (strain WSM419)</name>
    <name type="common">Ensifer medicae</name>
    <dbReference type="NCBI Taxonomy" id="366394"/>
    <lineage>
        <taxon>Bacteria</taxon>
        <taxon>Pseudomonadati</taxon>
        <taxon>Pseudomonadota</taxon>
        <taxon>Alphaproteobacteria</taxon>
        <taxon>Hyphomicrobiales</taxon>
        <taxon>Rhizobiaceae</taxon>
        <taxon>Sinorhizobium/Ensifer group</taxon>
        <taxon>Sinorhizobium</taxon>
    </lineage>
</organism>